<gene>
    <name evidence="1" type="primary">MRI1</name>
    <name type="ORF">PGUG_04931</name>
</gene>
<name>MTNA_PICGU</name>
<dbReference type="EC" id="5.3.1.23" evidence="1"/>
<dbReference type="EMBL" id="CH408160">
    <property type="protein sequence ID" value="EDK40833.2"/>
    <property type="molecule type" value="Genomic_DNA"/>
</dbReference>
<dbReference type="RefSeq" id="XP_001482976.1">
    <property type="nucleotide sequence ID" value="XM_001482926.1"/>
</dbReference>
<dbReference type="SMR" id="A5DNT0"/>
<dbReference type="FunCoup" id="A5DNT0">
    <property type="interactions" value="722"/>
</dbReference>
<dbReference type="STRING" id="294746.A5DNT0"/>
<dbReference type="GeneID" id="5125059"/>
<dbReference type="KEGG" id="pgu:PGUG_04931"/>
<dbReference type="VEuPathDB" id="FungiDB:PGUG_04931"/>
<dbReference type="eggNOG" id="KOG1468">
    <property type="taxonomic scope" value="Eukaryota"/>
</dbReference>
<dbReference type="HOGENOM" id="CLU_016218_1_3_1"/>
<dbReference type="InParanoid" id="A5DNT0"/>
<dbReference type="OMA" id="CETRPLN"/>
<dbReference type="OrthoDB" id="2461at2759"/>
<dbReference type="UniPathway" id="UPA00904">
    <property type="reaction ID" value="UER00874"/>
</dbReference>
<dbReference type="Proteomes" id="UP000001997">
    <property type="component" value="Unassembled WGS sequence"/>
</dbReference>
<dbReference type="GO" id="GO:0005737">
    <property type="term" value="C:cytoplasm"/>
    <property type="evidence" value="ECO:0007669"/>
    <property type="project" value="UniProtKB-SubCell"/>
</dbReference>
<dbReference type="GO" id="GO:0005634">
    <property type="term" value="C:nucleus"/>
    <property type="evidence" value="ECO:0007669"/>
    <property type="project" value="UniProtKB-SubCell"/>
</dbReference>
<dbReference type="GO" id="GO:0046523">
    <property type="term" value="F:S-methyl-5-thioribose-1-phosphate isomerase activity"/>
    <property type="evidence" value="ECO:0007669"/>
    <property type="project" value="UniProtKB-UniRule"/>
</dbReference>
<dbReference type="GO" id="GO:0019509">
    <property type="term" value="P:L-methionine salvage from methylthioadenosine"/>
    <property type="evidence" value="ECO:0007669"/>
    <property type="project" value="UniProtKB-UniRule"/>
</dbReference>
<dbReference type="FunFam" id="1.20.120.420:FF:000003">
    <property type="entry name" value="Methylthioribose-1-phosphate isomerase"/>
    <property type="match status" value="1"/>
</dbReference>
<dbReference type="Gene3D" id="1.20.120.420">
    <property type="entry name" value="translation initiation factor eif-2b, domain 1"/>
    <property type="match status" value="1"/>
</dbReference>
<dbReference type="Gene3D" id="3.40.50.10470">
    <property type="entry name" value="Translation initiation factor eif-2b, domain 2"/>
    <property type="match status" value="1"/>
</dbReference>
<dbReference type="HAMAP" id="MF_01678">
    <property type="entry name" value="Salvage_MtnA"/>
    <property type="match status" value="1"/>
</dbReference>
<dbReference type="InterPro" id="IPR000649">
    <property type="entry name" value="IF-2B-related"/>
</dbReference>
<dbReference type="InterPro" id="IPR005251">
    <property type="entry name" value="IF-M1Pi"/>
</dbReference>
<dbReference type="InterPro" id="IPR042529">
    <property type="entry name" value="IF_2B-like_C"/>
</dbReference>
<dbReference type="InterPro" id="IPR011559">
    <property type="entry name" value="Initiation_fac_2B_a/b/d"/>
</dbReference>
<dbReference type="InterPro" id="IPR027363">
    <property type="entry name" value="M1Pi_N"/>
</dbReference>
<dbReference type="InterPro" id="IPR037171">
    <property type="entry name" value="NagB/RpiA_transferase-like"/>
</dbReference>
<dbReference type="NCBIfam" id="TIGR00524">
    <property type="entry name" value="eIF-2B_rel"/>
    <property type="match status" value="1"/>
</dbReference>
<dbReference type="NCBIfam" id="NF004326">
    <property type="entry name" value="PRK05720.1"/>
    <property type="match status" value="1"/>
</dbReference>
<dbReference type="NCBIfam" id="TIGR00512">
    <property type="entry name" value="salvage_mtnA"/>
    <property type="match status" value="1"/>
</dbReference>
<dbReference type="PANTHER" id="PTHR43475">
    <property type="entry name" value="METHYLTHIORIBOSE-1-PHOSPHATE ISOMERASE"/>
    <property type="match status" value="1"/>
</dbReference>
<dbReference type="PANTHER" id="PTHR43475:SF1">
    <property type="entry name" value="METHYLTHIORIBOSE-1-PHOSPHATE ISOMERASE"/>
    <property type="match status" value="1"/>
</dbReference>
<dbReference type="Pfam" id="PF01008">
    <property type="entry name" value="IF-2B"/>
    <property type="match status" value="1"/>
</dbReference>
<dbReference type="SUPFAM" id="SSF100950">
    <property type="entry name" value="NagB/RpiA/CoA transferase-like"/>
    <property type="match status" value="1"/>
</dbReference>
<protein>
    <recommendedName>
        <fullName evidence="1">Methylthioribose-1-phosphate isomerase</fullName>
        <shortName evidence="1">M1Pi</shortName>
        <shortName evidence="1">MTR-1-P isomerase</shortName>
        <ecNumber evidence="1">5.3.1.23</ecNumber>
    </recommendedName>
    <alternativeName>
        <fullName evidence="1">S-methyl-5-thioribose-1-phosphate isomerase</fullName>
    </alternativeName>
    <alternativeName>
        <fullName evidence="1">Translation initiation factor eIF-2B subunit alpha/beta/delta-like protein</fullName>
    </alternativeName>
</protein>
<comment type="function">
    <text evidence="1">Catalyzes the interconversion of methylthioribose-1-phosphate (MTR-1-P) into methylthioribulose-1-phosphate (MTRu-1-P).</text>
</comment>
<comment type="catalytic activity">
    <reaction evidence="1">
        <text>5-(methylsulfanyl)-alpha-D-ribose 1-phosphate = 5-(methylsulfanyl)-D-ribulose 1-phosphate</text>
        <dbReference type="Rhea" id="RHEA:19989"/>
        <dbReference type="ChEBI" id="CHEBI:58533"/>
        <dbReference type="ChEBI" id="CHEBI:58548"/>
        <dbReference type="EC" id="5.3.1.23"/>
    </reaction>
</comment>
<comment type="pathway">
    <text evidence="1">Amino-acid biosynthesis; L-methionine biosynthesis via salvage pathway; L-methionine from S-methyl-5-thio-alpha-D-ribose 1-phosphate: step 1/6.</text>
</comment>
<comment type="subcellular location">
    <subcellularLocation>
        <location evidence="1">Cytoplasm</location>
    </subcellularLocation>
    <subcellularLocation>
        <location evidence="1">Nucleus</location>
    </subcellularLocation>
</comment>
<comment type="similarity">
    <text evidence="1">Belongs to the eIF-2B alpha/beta/delta subunits family. MtnA subfamily.</text>
</comment>
<reference key="1">
    <citation type="journal article" date="2009" name="Nature">
        <title>Evolution of pathogenicity and sexual reproduction in eight Candida genomes.</title>
        <authorList>
            <person name="Butler G."/>
            <person name="Rasmussen M.D."/>
            <person name="Lin M.F."/>
            <person name="Santos M.A.S."/>
            <person name="Sakthikumar S."/>
            <person name="Munro C.A."/>
            <person name="Rheinbay E."/>
            <person name="Grabherr M."/>
            <person name="Forche A."/>
            <person name="Reedy J.L."/>
            <person name="Agrafioti I."/>
            <person name="Arnaud M.B."/>
            <person name="Bates S."/>
            <person name="Brown A.J.P."/>
            <person name="Brunke S."/>
            <person name="Costanzo M.C."/>
            <person name="Fitzpatrick D.A."/>
            <person name="de Groot P.W.J."/>
            <person name="Harris D."/>
            <person name="Hoyer L.L."/>
            <person name="Hube B."/>
            <person name="Klis F.M."/>
            <person name="Kodira C."/>
            <person name="Lennard N."/>
            <person name="Logue M.E."/>
            <person name="Martin R."/>
            <person name="Neiman A.M."/>
            <person name="Nikolaou E."/>
            <person name="Quail M.A."/>
            <person name="Quinn J."/>
            <person name="Santos M.C."/>
            <person name="Schmitzberger F.F."/>
            <person name="Sherlock G."/>
            <person name="Shah P."/>
            <person name="Silverstein K.A.T."/>
            <person name="Skrzypek M.S."/>
            <person name="Soll D."/>
            <person name="Staggs R."/>
            <person name="Stansfield I."/>
            <person name="Stumpf M.P.H."/>
            <person name="Sudbery P.E."/>
            <person name="Srikantha T."/>
            <person name="Zeng Q."/>
            <person name="Berman J."/>
            <person name="Berriman M."/>
            <person name="Heitman J."/>
            <person name="Gow N.A.R."/>
            <person name="Lorenz M.C."/>
            <person name="Birren B.W."/>
            <person name="Kellis M."/>
            <person name="Cuomo C.A."/>
        </authorList>
    </citation>
    <scope>NUCLEOTIDE SEQUENCE [LARGE SCALE GENOMIC DNA]</scope>
    <source>
        <strain>ATCC 6260 / CBS 566 / DSM 6381 / JCM 1539 / NBRC 10279 / NRRL Y-324</strain>
    </source>
</reference>
<evidence type="ECO:0000255" key="1">
    <source>
        <dbReference type="HAMAP-Rule" id="MF_03119"/>
    </source>
</evidence>
<keyword id="KW-0028">Amino-acid biosynthesis</keyword>
<keyword id="KW-0963">Cytoplasm</keyword>
<keyword id="KW-0413">Isomerase</keyword>
<keyword id="KW-0486">Methionine biosynthesis</keyword>
<keyword id="KW-0539">Nucleus</keyword>
<keyword id="KW-1185">Reference proteome</keyword>
<organism>
    <name type="scientific">Meyerozyma guilliermondii (strain ATCC 6260 / CBS 566 / DSM 6381 / JCM 1539 / NBRC 10279 / NRRL Y-324)</name>
    <name type="common">Yeast</name>
    <name type="synonym">Candida guilliermondii</name>
    <dbReference type="NCBI Taxonomy" id="294746"/>
    <lineage>
        <taxon>Eukaryota</taxon>
        <taxon>Fungi</taxon>
        <taxon>Dikarya</taxon>
        <taxon>Ascomycota</taxon>
        <taxon>Saccharomycotina</taxon>
        <taxon>Pichiomycetes</taxon>
        <taxon>Debaryomycetaceae</taxon>
        <taxon>Meyerozyma</taxon>
    </lineage>
</organism>
<sequence length="390" mass="43204">MTTLEAIKFDRTNVTLQILDQLLIPYSTEYLNIEGVDDAYDAIKSMQVRGAPAIAIVGSFAIVVEIKNRHISSIDELAAKIDYLESSRPTAVNLSNACNEIRALLGNSESLDEVYKRVFDFAVALYDDDLSNNHKIGSNGVDYLVESLRSQNFEGPFSIITYCNTGSLATSGHGTALGIVRSAYKALSKENSKEKFWLEQIYPCETRPYNQGAKLTTFELKYEKIPFTLICDNMVTSLISRTHNKKQVKDIVAPVKFAIVGADRIVQNGDTANKIGTFQLAAIFDSFNRRNTGPRDSLKMIVAAPRTTIDLKTTTGDDIIIEERPANELTTLKGPILRKDVAGEKQIVGVATPGIQVWNPAFDVTPHELIDSIVTEEKVYAKDKEGNYHL</sequence>
<accession>A5DNT0</accession>
<proteinExistence type="inferred from homology"/>
<feature type="chain" id="PRO_0000402041" description="Methylthioribose-1-phosphate isomerase">
    <location>
        <begin position="1"/>
        <end position="390"/>
    </location>
</feature>
<feature type="active site" description="Proton donor" evidence="1">
    <location>
        <position position="263"/>
    </location>
</feature>
<feature type="site" description="Transition state stabilizer" evidence="1">
    <location>
        <position position="163"/>
    </location>
</feature>